<evidence type="ECO:0000250" key="1"/>
<evidence type="ECO:0000269" key="2">
    <source>
    </source>
</evidence>
<evidence type="ECO:0000269" key="3">
    <source>
    </source>
</evidence>
<evidence type="ECO:0000303" key="4">
    <source>
    </source>
</evidence>
<evidence type="ECO:0000303" key="5">
    <source>
    </source>
</evidence>
<evidence type="ECO:0000305" key="6"/>
<evidence type="ECO:0000312" key="7">
    <source>
        <dbReference type="FlyBase" id="FBgn0001128"/>
    </source>
</evidence>
<sequence>MADKVNVCIVGSGNWGSAIAKIVGANAAALPEFEERVTMFVYEELIDGKKLTEIINETHENVKYLKGHKLPPNVVAVPDLVEAAKNADILIFVVPHQFIPNFCKQLLGKIKPNAIAISLIKGFDKAEGGGIDLISHIITRHLKIPCAVLMGANLANEVAEGNFCETTIGCTDKKYGKVLRDLFQANHFRVVVVDDADAVEVCGALKNIVACGAGFVDGLKLGDNTKAAVIRLGLMEMIRFVDVFYPGSKLSTFFESCGVADLITTCYGGRNRRVSEAFVTSGKTIEELEKEMLNGQKLQGPPTAEEVNYMLKNKGLEDKFPLFTAIHKICTNQLKPNDLIDCIRNHPEHMDTSIMPSPKLQNL</sequence>
<dbReference type="EC" id="1.1.1.8"/>
<dbReference type="EMBL" id="J04567">
    <property type="protein sequence ID" value="AAA28591.1"/>
    <property type="molecule type" value="Genomic_DNA"/>
</dbReference>
<dbReference type="EMBL" id="J04567">
    <property type="protein sequence ID" value="AAA28592.1"/>
    <property type="molecule type" value="Genomic_DNA"/>
</dbReference>
<dbReference type="EMBL" id="J04567">
    <property type="protein sequence ID" value="AAA28593.1"/>
    <property type="molecule type" value="Genomic_DNA"/>
</dbReference>
<dbReference type="EMBL" id="X14179">
    <property type="protein sequence ID" value="CAA32379.1"/>
    <property type="molecule type" value="Genomic_DNA"/>
</dbReference>
<dbReference type="EMBL" id="X14179">
    <property type="protein sequence ID" value="CAA32380.1"/>
    <property type="molecule type" value="Genomic_DNA"/>
</dbReference>
<dbReference type="EMBL" id="X14179">
    <property type="protein sequence ID" value="CAA32381.1"/>
    <property type="molecule type" value="Genomic_DNA"/>
</dbReference>
<dbReference type="EMBL" id="X67650">
    <property type="protein sequence ID" value="CAA47892.1"/>
    <property type="molecule type" value="Genomic_DNA"/>
</dbReference>
<dbReference type="EMBL" id="X61223">
    <property type="status" value="NOT_ANNOTATED_CDS"/>
    <property type="molecule type" value="Genomic_DNA"/>
</dbReference>
<dbReference type="EMBL" id="X61224">
    <property type="protein sequence ID" value="CAA43536.1"/>
    <property type="molecule type" value="Genomic_DNA"/>
</dbReference>
<dbReference type="EMBL" id="AE014134">
    <property type="protein sequence ID" value="AAF52304.1"/>
    <property type="molecule type" value="Genomic_DNA"/>
</dbReference>
<dbReference type="EMBL" id="AE014134">
    <property type="protein sequence ID" value="AAN10562.1"/>
    <property type="molecule type" value="Genomic_DNA"/>
</dbReference>
<dbReference type="EMBL" id="AE014134">
    <property type="protein sequence ID" value="AAN10563.1"/>
    <property type="molecule type" value="Genomic_DNA"/>
</dbReference>
<dbReference type="EMBL" id="AY058492">
    <property type="protein sequence ID" value="AAL13721.1"/>
    <property type="molecule type" value="mRNA"/>
</dbReference>
<dbReference type="EMBL" id="X80204">
    <property type="protein sequence ID" value="CAA56497.1"/>
    <property type="molecule type" value="Genomic_DNA"/>
</dbReference>
<dbReference type="EMBL" id="M13786">
    <property type="protein sequence ID" value="AAA28590.1"/>
    <property type="molecule type" value="Genomic_DNA"/>
</dbReference>
<dbReference type="EMBL" id="J03927">
    <property type="protein sequence ID" value="AAA28553.1"/>
    <property type="molecule type" value="Genomic_DNA"/>
</dbReference>
<dbReference type="EMBL" id="J03927">
    <property type="protein sequence ID" value="AAA28554.1"/>
    <property type="molecule type" value="Genomic_DNA"/>
</dbReference>
<dbReference type="EMBL" id="J03927">
    <property type="protein sequence ID" value="AAA28555.1"/>
    <property type="molecule type" value="Genomic_DNA"/>
</dbReference>
<dbReference type="PIR" id="S06758">
    <property type="entry name" value="S06758"/>
</dbReference>
<dbReference type="PIR" id="S06759">
    <property type="entry name" value="S06759"/>
</dbReference>
<dbReference type="PIR" id="S06760">
    <property type="entry name" value="S06760"/>
</dbReference>
<dbReference type="PIR" id="S21963">
    <property type="entry name" value="S21963"/>
</dbReference>
<dbReference type="RefSeq" id="NP_001260111.1">
    <molecule id="P13706-4"/>
    <property type="nucleotide sequence ID" value="NM_001273182.1"/>
</dbReference>
<dbReference type="RefSeq" id="NP_001260112.1">
    <molecule id="P13706-3"/>
    <property type="nucleotide sequence ID" value="NM_001273183.2"/>
</dbReference>
<dbReference type="RefSeq" id="NP_001260113.1">
    <molecule id="P13706-2"/>
    <property type="nucleotide sequence ID" value="NM_001273184.2"/>
</dbReference>
<dbReference type="RefSeq" id="NP_476565.1">
    <molecule id="P13706-3"/>
    <property type="nucleotide sequence ID" value="NM_057217.4"/>
</dbReference>
<dbReference type="RefSeq" id="NP_476566.1">
    <molecule id="P13706-2"/>
    <property type="nucleotide sequence ID" value="NM_057218.4"/>
</dbReference>
<dbReference type="RefSeq" id="NP_476567.1">
    <molecule id="P13706-4"/>
    <property type="nucleotide sequence ID" value="NM_057219.4"/>
</dbReference>
<dbReference type="SMR" id="P13706"/>
<dbReference type="BioGRID" id="59989">
    <property type="interactions" value="74"/>
</dbReference>
<dbReference type="DIP" id="DIP-21689N"/>
<dbReference type="FunCoup" id="P13706">
    <property type="interactions" value="853"/>
</dbReference>
<dbReference type="IntAct" id="P13706">
    <property type="interactions" value="75"/>
</dbReference>
<dbReference type="STRING" id="7227.FBpp0305431"/>
<dbReference type="PaxDb" id="7227-FBpp0305431"/>
<dbReference type="DNASU" id="33824"/>
<dbReference type="EnsemblMetazoa" id="FBtr0079146">
    <molecule id="P13706-3"/>
    <property type="protein sequence ID" value="FBpp0078777"/>
    <property type="gene ID" value="FBgn0001128"/>
</dbReference>
<dbReference type="EnsemblMetazoa" id="FBtr0079147">
    <molecule id="P13706-2"/>
    <property type="protein sequence ID" value="FBpp0078778"/>
    <property type="gene ID" value="FBgn0001128"/>
</dbReference>
<dbReference type="EnsemblMetazoa" id="FBtr0079148">
    <molecule id="P13706-4"/>
    <property type="protein sequence ID" value="FBpp0078779"/>
    <property type="gene ID" value="FBgn0001128"/>
</dbReference>
<dbReference type="EnsemblMetazoa" id="FBtr0333228">
    <molecule id="P13706-4"/>
    <property type="protein sequence ID" value="FBpp0305430"/>
    <property type="gene ID" value="FBgn0001128"/>
</dbReference>
<dbReference type="EnsemblMetazoa" id="FBtr0333229">
    <molecule id="P13706-3"/>
    <property type="protein sequence ID" value="FBpp0305431"/>
    <property type="gene ID" value="FBgn0001128"/>
</dbReference>
<dbReference type="EnsemblMetazoa" id="FBtr0333230">
    <molecule id="P13706-2"/>
    <property type="protein sequence ID" value="FBpp0305432"/>
    <property type="gene ID" value="FBgn0001128"/>
</dbReference>
<dbReference type="GeneID" id="33824"/>
<dbReference type="KEGG" id="dme:Dmel_CG9042"/>
<dbReference type="AGR" id="FB:FBgn0001128"/>
<dbReference type="CTD" id="33824"/>
<dbReference type="FlyBase" id="FBgn0001128">
    <property type="gene designation" value="Gpdh1"/>
</dbReference>
<dbReference type="VEuPathDB" id="VectorBase:FBgn0001128"/>
<dbReference type="eggNOG" id="KOG2711">
    <property type="taxonomic scope" value="Eukaryota"/>
</dbReference>
<dbReference type="GeneTree" id="ENSGT00390000003114"/>
<dbReference type="InParanoid" id="P13706"/>
<dbReference type="OMA" id="NRMFGNM"/>
<dbReference type="OrthoDB" id="10263760at2759"/>
<dbReference type="PhylomeDB" id="P13706"/>
<dbReference type="BRENDA" id="1.1.1.8">
    <property type="organism ID" value="1994"/>
</dbReference>
<dbReference type="Reactome" id="R-DME-1483166">
    <property type="pathway name" value="Synthesis of PA"/>
</dbReference>
<dbReference type="SignaLink" id="P13706"/>
<dbReference type="UniPathway" id="UPA00086"/>
<dbReference type="BioGRID-ORCS" id="33824">
    <property type="hits" value="1 hit in 3 CRISPR screens"/>
</dbReference>
<dbReference type="ChiTaRS" id="Gpdh">
    <property type="organism name" value="fly"/>
</dbReference>
<dbReference type="GenomeRNAi" id="33824"/>
<dbReference type="PRO" id="PR:P13706"/>
<dbReference type="Proteomes" id="UP000000803">
    <property type="component" value="Chromosome 2L"/>
</dbReference>
<dbReference type="Bgee" id="FBgn0001128">
    <property type="expression patterns" value="Expressed in fat body cell in open tracheal system trachea and 268 other cell types or tissues"/>
</dbReference>
<dbReference type="ExpressionAtlas" id="P13706">
    <property type="expression patterns" value="baseline and differential"/>
</dbReference>
<dbReference type="GO" id="GO:0005737">
    <property type="term" value="C:cytoplasm"/>
    <property type="evidence" value="ECO:0000314"/>
    <property type="project" value="FlyBase"/>
</dbReference>
<dbReference type="GO" id="GO:0005829">
    <property type="term" value="C:cytosol"/>
    <property type="evidence" value="ECO:0000314"/>
    <property type="project" value="FlyBase"/>
</dbReference>
<dbReference type="GO" id="GO:0031430">
    <property type="term" value="C:M band"/>
    <property type="evidence" value="ECO:0000314"/>
    <property type="project" value="FlyBase"/>
</dbReference>
<dbReference type="GO" id="GO:0030018">
    <property type="term" value="C:Z disc"/>
    <property type="evidence" value="ECO:0000314"/>
    <property type="project" value="FlyBase"/>
</dbReference>
<dbReference type="GO" id="GO:0141152">
    <property type="term" value="F:glycerol-3-phosphate dehydrogenase (NAD+) activity"/>
    <property type="evidence" value="ECO:0000314"/>
    <property type="project" value="FlyBase"/>
</dbReference>
<dbReference type="GO" id="GO:0051287">
    <property type="term" value="F:NAD binding"/>
    <property type="evidence" value="ECO:0007669"/>
    <property type="project" value="InterPro"/>
</dbReference>
<dbReference type="GO" id="GO:0042803">
    <property type="term" value="F:protein homodimerization activity"/>
    <property type="evidence" value="ECO:0007669"/>
    <property type="project" value="InterPro"/>
</dbReference>
<dbReference type="GO" id="GO:0006067">
    <property type="term" value="P:ethanol metabolic process"/>
    <property type="evidence" value="ECO:0000315"/>
    <property type="project" value="CACAO"/>
</dbReference>
<dbReference type="GO" id="GO:0007629">
    <property type="term" value="P:flight behavior"/>
    <property type="evidence" value="ECO:0000315"/>
    <property type="project" value="FlyBase"/>
</dbReference>
<dbReference type="GO" id="GO:0046167">
    <property type="term" value="P:glycerol-3-phosphate biosynthetic process"/>
    <property type="evidence" value="ECO:0000315"/>
    <property type="project" value="FlyBase"/>
</dbReference>
<dbReference type="GO" id="GO:0046168">
    <property type="term" value="P:glycerol-3-phosphate catabolic process"/>
    <property type="evidence" value="ECO:0007669"/>
    <property type="project" value="InterPro"/>
</dbReference>
<dbReference type="GO" id="GO:0006072">
    <property type="term" value="P:glycerol-3-phosphate metabolic process"/>
    <property type="evidence" value="ECO:0000314"/>
    <property type="project" value="FlyBase"/>
</dbReference>
<dbReference type="GO" id="GO:0006127">
    <property type="term" value="P:glycerol-3-phosphate shuttle"/>
    <property type="evidence" value="ECO:0000315"/>
    <property type="project" value="FlyBase"/>
</dbReference>
<dbReference type="GO" id="GO:0006650">
    <property type="term" value="P:glycerophospholipid metabolic process"/>
    <property type="evidence" value="ECO:0007669"/>
    <property type="project" value="UniProtKB-UniPathway"/>
</dbReference>
<dbReference type="GO" id="GO:0006096">
    <property type="term" value="P:glycolytic process"/>
    <property type="evidence" value="ECO:0000316"/>
    <property type="project" value="FlyBase"/>
</dbReference>
<dbReference type="GO" id="GO:0006734">
    <property type="term" value="P:NADH metabolic process"/>
    <property type="evidence" value="ECO:0000314"/>
    <property type="project" value="FlyBase"/>
</dbReference>
<dbReference type="GO" id="GO:0055093">
    <property type="term" value="P:response to hyperoxia"/>
    <property type="evidence" value="ECO:0000315"/>
    <property type="project" value="FlyBase"/>
</dbReference>
<dbReference type="GO" id="GO:0006641">
    <property type="term" value="P:triglyceride metabolic process"/>
    <property type="evidence" value="ECO:0000315"/>
    <property type="project" value="FlyBase"/>
</dbReference>
<dbReference type="FunFam" id="1.10.1040.10:FF:000004">
    <property type="entry name" value="Glycerol-3-phosphate dehydrogenase [NAD(+)]"/>
    <property type="match status" value="1"/>
</dbReference>
<dbReference type="FunFam" id="3.40.50.720:FF:000088">
    <property type="entry name" value="Glycerol-3-phosphate dehydrogenase [NAD(+)]"/>
    <property type="match status" value="1"/>
</dbReference>
<dbReference type="Gene3D" id="1.10.1040.10">
    <property type="entry name" value="N-(1-d-carboxylethyl)-l-norvaline Dehydrogenase, domain 2"/>
    <property type="match status" value="1"/>
</dbReference>
<dbReference type="Gene3D" id="3.40.50.720">
    <property type="entry name" value="NAD(P)-binding Rossmann-like Domain"/>
    <property type="match status" value="1"/>
</dbReference>
<dbReference type="InterPro" id="IPR008927">
    <property type="entry name" value="6-PGluconate_DH-like_C_sf"/>
</dbReference>
<dbReference type="InterPro" id="IPR013328">
    <property type="entry name" value="6PGD_dom2"/>
</dbReference>
<dbReference type="InterPro" id="IPR006168">
    <property type="entry name" value="G3P_DH_NAD-dep"/>
</dbReference>
<dbReference type="InterPro" id="IPR006109">
    <property type="entry name" value="G3P_DH_NAD-dep_C"/>
</dbReference>
<dbReference type="InterPro" id="IPR017751">
    <property type="entry name" value="G3P_DH_NAD-dep_euk"/>
</dbReference>
<dbReference type="InterPro" id="IPR011128">
    <property type="entry name" value="G3P_DH_NAD-dep_N"/>
</dbReference>
<dbReference type="InterPro" id="IPR036291">
    <property type="entry name" value="NAD(P)-bd_dom_sf"/>
</dbReference>
<dbReference type="NCBIfam" id="TIGR03376">
    <property type="entry name" value="glycerol3P_DH"/>
    <property type="match status" value="1"/>
</dbReference>
<dbReference type="PANTHER" id="PTHR11728">
    <property type="entry name" value="GLYCEROL-3-PHOSPHATE DEHYDROGENASE"/>
    <property type="match status" value="1"/>
</dbReference>
<dbReference type="PANTHER" id="PTHR11728:SF8">
    <property type="entry name" value="GLYCEROL-3-PHOSPHATE DEHYDROGENASE [NAD(+)]-RELATED"/>
    <property type="match status" value="1"/>
</dbReference>
<dbReference type="Pfam" id="PF07479">
    <property type="entry name" value="NAD_Gly3P_dh_C"/>
    <property type="match status" value="1"/>
</dbReference>
<dbReference type="Pfam" id="PF01210">
    <property type="entry name" value="NAD_Gly3P_dh_N"/>
    <property type="match status" value="1"/>
</dbReference>
<dbReference type="PIRSF" id="PIRSF000114">
    <property type="entry name" value="Glycerol-3-P_dh"/>
    <property type="match status" value="1"/>
</dbReference>
<dbReference type="PRINTS" id="PR00077">
    <property type="entry name" value="GPDHDRGNASE"/>
</dbReference>
<dbReference type="SUPFAM" id="SSF48179">
    <property type="entry name" value="6-phosphogluconate dehydrogenase C-terminal domain-like"/>
    <property type="match status" value="1"/>
</dbReference>
<dbReference type="SUPFAM" id="SSF51735">
    <property type="entry name" value="NAD(P)-binding Rossmann-fold domains"/>
    <property type="match status" value="1"/>
</dbReference>
<dbReference type="PROSITE" id="PS00957">
    <property type="entry name" value="NAD_G3PDH"/>
    <property type="match status" value="1"/>
</dbReference>
<feature type="chain" id="PRO_0000138075" description="Glycerol-3-phosphate dehydrogenase [NAD(+)], cytoplasmic">
    <location>
        <begin position="1"/>
        <end position="363"/>
    </location>
</feature>
<feature type="active site" description="Proton acceptor" evidence="1">
    <location>
        <position position="206"/>
    </location>
</feature>
<feature type="binding site" evidence="1">
    <location>
        <begin position="11"/>
        <end position="16"/>
    </location>
    <ligand>
        <name>NAD(+)</name>
        <dbReference type="ChEBI" id="CHEBI:57540"/>
    </ligand>
</feature>
<feature type="binding site" evidence="1">
    <location>
        <position position="98"/>
    </location>
    <ligand>
        <name>NAD(+)</name>
        <dbReference type="ChEBI" id="CHEBI:57540"/>
    </ligand>
</feature>
<feature type="binding site" evidence="1">
    <location>
        <position position="121"/>
    </location>
    <ligand>
        <name>NAD(+)</name>
        <dbReference type="ChEBI" id="CHEBI:57540"/>
    </ligand>
</feature>
<feature type="binding site" evidence="1">
    <location>
        <position position="121"/>
    </location>
    <ligand>
        <name>substrate</name>
    </ligand>
</feature>
<feature type="binding site" evidence="1">
    <location>
        <position position="155"/>
    </location>
    <ligand>
        <name>NAD(+)</name>
        <dbReference type="ChEBI" id="CHEBI:57540"/>
    </ligand>
</feature>
<feature type="binding site" evidence="1">
    <location>
        <begin position="270"/>
        <end position="271"/>
    </location>
    <ligand>
        <name>substrate</name>
    </ligand>
</feature>
<feature type="binding site" evidence="1">
    <location>
        <position position="270"/>
    </location>
    <ligand>
        <name>NAD(+)</name>
        <dbReference type="ChEBI" id="CHEBI:57540"/>
    </ligand>
</feature>
<feature type="binding site" evidence="1">
    <location>
        <position position="299"/>
    </location>
    <ligand>
        <name>NAD(+)</name>
        <dbReference type="ChEBI" id="CHEBI:57540"/>
    </ligand>
</feature>
<feature type="splice variant" id="VSP_001590" description="In isoform GPDH-3." evidence="6">
    <location>
        <begin position="351"/>
        <end position="363"/>
    </location>
</feature>
<feature type="splice variant" id="VSP_001589" description="In isoform GPDH-1." evidence="6">
    <location>
        <begin position="351"/>
        <end position="360"/>
    </location>
</feature>
<feature type="splice variant" id="VSP_001591" description="In isoform GPDH-2." evidence="4">
    <location>
        <begin position="361"/>
        <end position="363"/>
    </location>
</feature>
<feature type="sequence variant" description="In allele GPDH-ACYG22.">
    <original>N</original>
    <variation>Y</variation>
    <location>
        <position position="14"/>
    </location>
</feature>
<feature type="sequence variant" description="In allele GPDH-ACB62.">
    <original>C</original>
    <variation>G</variation>
    <location>
        <position position="266"/>
    </location>
</feature>
<feature type="sequence variant" description="In allele GPDH-ACYG22.">
    <original>R</original>
    <variation>C</variation>
    <location>
        <position position="273"/>
    </location>
</feature>
<feature type="sequence variant" description="In allele GPDH-AT198, allele GPDH-ACB62 and allele GPDH-S.">
    <original>N</original>
    <variation>K</variation>
    <location>
        <position position="337"/>
    </location>
</feature>
<feature type="sequence conflict" description="In Ref. 3; CAA47892." evidence="6" ref="3">
    <original>DTSIMPSPKLQNL</original>
    <variation>GYVHHAVAKTCKICKSPKEAETFLTFLCTTENKCIFSAQRQLDESLDSIF</variation>
    <location>
        <begin position="351"/>
        <end position="363"/>
    </location>
</feature>
<name>GPDA_DROME</name>
<organism>
    <name type="scientific">Drosophila melanogaster</name>
    <name type="common">Fruit fly</name>
    <dbReference type="NCBI Taxonomy" id="7227"/>
    <lineage>
        <taxon>Eukaryota</taxon>
        <taxon>Metazoa</taxon>
        <taxon>Ecdysozoa</taxon>
        <taxon>Arthropoda</taxon>
        <taxon>Hexapoda</taxon>
        <taxon>Insecta</taxon>
        <taxon>Pterygota</taxon>
        <taxon>Neoptera</taxon>
        <taxon>Endopterygota</taxon>
        <taxon>Diptera</taxon>
        <taxon>Brachycera</taxon>
        <taxon>Muscomorpha</taxon>
        <taxon>Ephydroidea</taxon>
        <taxon>Drosophilidae</taxon>
        <taxon>Drosophila</taxon>
        <taxon>Sophophora</taxon>
    </lineage>
</organism>
<reference key="1">
    <citation type="journal article" date="1989" name="Proc. Natl. Acad. Sci. U.S.A.">
        <title>Structural characterization of the alpha-glycerol-3-phosphate dehydrogenase-encoding gene of Drosophila melanogaster.</title>
        <authorList>
            <person name="von Kalm L."/>
            <person name="Weaver J."/>
            <person name="Demarco J."/>
            <person name="Macintyre R.J."/>
            <person name="Sullivan D.T."/>
        </authorList>
    </citation>
    <scope>NUCLEOTIDE SEQUENCE [GENOMIC DNA]</scope>
    <scope>ALTERNATIVE SPLICING</scope>
    <scope>DEVELOPMENTAL STAGE</scope>
    <source>
        <strain>Canton-S</strain>
    </source>
</reference>
<reference key="2">
    <citation type="journal article" date="1989" name="Nucleic Acids Res.">
        <title>Sequence, structure and evolution of the gene coding for sn-glycerol-3-phosphate dehydrogenase in Drosophila melanogaster.</title>
        <authorList>
            <person name="Bewley G.C."/>
            <person name="Cook J.L."/>
            <person name="Kusakabe S."/>
            <person name="Mukai T."/>
            <person name="Rigby D.L."/>
            <person name="Chambers G.K."/>
        </authorList>
    </citation>
    <scope>NUCLEOTIDE SEQUENCE [GENOMIC DNA]</scope>
    <scope>PROTEIN SEQUENCE OF 21-133; 139-141 AND 148-350</scope>
    <scope>ALTERNATIVE SPLICING</scope>
    <scope>DEFINITION OF ALLELES FAST AND SLOW</scope>
    <source>
        <strain>Canton-S</strain>
        <strain>Ogasawara</strain>
        <strain>Oregon-R</strain>
    </source>
</reference>
<reference key="3">
    <citation type="journal article" date="1993" name="Proc. R. Soc. B">
        <title>Defective P element insertions affect the expression of sn-glycerol-3-phosphate dehydrogenase alleles in natural populations of Drosophila melanogaster.</title>
        <authorList>
            <person name="Reed D.S."/>
            <person name="Gibson J.B."/>
        </authorList>
    </citation>
    <scope>NUCLEOTIDE SEQUENCE [GENOMIC DNA]</scope>
    <scope>MUTANTS</scope>
    <source>
        <strain>Tasmania</strain>
    </source>
</reference>
<reference key="4">
    <citation type="journal article" date="1995" name="Insect Biochem. Mol. Biol.">
        <title>Molecular analysis of a Drosophila melanogaster sn-glycerol-3-phosphate dehydrogenase allozyme variant that has cold labile activity.</title>
        <authorList>
            <person name="Symonds J.E."/>
            <person name="Gibson J.B."/>
            <person name="Wilks A.V."/>
            <person name="Wilanowski T.M."/>
        </authorList>
    </citation>
    <scope>NUCLEOTIDE SEQUENCE [GENOMIC DNA] (ALLELE GPDH-ACB62)</scope>
    <source>
        <strain>Cardwell</strain>
    </source>
</reference>
<reference key="5">
    <citation type="journal article" date="2000" name="Science">
        <title>The genome sequence of Drosophila melanogaster.</title>
        <authorList>
            <person name="Adams M.D."/>
            <person name="Celniker S.E."/>
            <person name="Holt R.A."/>
            <person name="Evans C.A."/>
            <person name="Gocayne J.D."/>
            <person name="Amanatides P.G."/>
            <person name="Scherer S.E."/>
            <person name="Li P.W."/>
            <person name="Hoskins R.A."/>
            <person name="Galle R.F."/>
            <person name="George R.A."/>
            <person name="Lewis S.E."/>
            <person name="Richards S."/>
            <person name="Ashburner M."/>
            <person name="Henderson S.N."/>
            <person name="Sutton G.G."/>
            <person name="Wortman J.R."/>
            <person name="Yandell M.D."/>
            <person name="Zhang Q."/>
            <person name="Chen L.X."/>
            <person name="Brandon R.C."/>
            <person name="Rogers Y.-H.C."/>
            <person name="Blazej R.G."/>
            <person name="Champe M."/>
            <person name="Pfeiffer B.D."/>
            <person name="Wan K.H."/>
            <person name="Doyle C."/>
            <person name="Baxter E.G."/>
            <person name="Helt G."/>
            <person name="Nelson C.R."/>
            <person name="Miklos G.L.G."/>
            <person name="Abril J.F."/>
            <person name="Agbayani A."/>
            <person name="An H.-J."/>
            <person name="Andrews-Pfannkoch C."/>
            <person name="Baldwin D."/>
            <person name="Ballew R.M."/>
            <person name="Basu A."/>
            <person name="Baxendale J."/>
            <person name="Bayraktaroglu L."/>
            <person name="Beasley E.M."/>
            <person name="Beeson K.Y."/>
            <person name="Benos P.V."/>
            <person name="Berman B.P."/>
            <person name="Bhandari D."/>
            <person name="Bolshakov S."/>
            <person name="Borkova D."/>
            <person name="Botchan M.R."/>
            <person name="Bouck J."/>
            <person name="Brokstein P."/>
            <person name="Brottier P."/>
            <person name="Burtis K.C."/>
            <person name="Busam D.A."/>
            <person name="Butler H."/>
            <person name="Cadieu E."/>
            <person name="Center A."/>
            <person name="Chandra I."/>
            <person name="Cherry J.M."/>
            <person name="Cawley S."/>
            <person name="Dahlke C."/>
            <person name="Davenport L.B."/>
            <person name="Davies P."/>
            <person name="de Pablos B."/>
            <person name="Delcher A."/>
            <person name="Deng Z."/>
            <person name="Mays A.D."/>
            <person name="Dew I."/>
            <person name="Dietz S.M."/>
            <person name="Dodson K."/>
            <person name="Doup L.E."/>
            <person name="Downes M."/>
            <person name="Dugan-Rocha S."/>
            <person name="Dunkov B.C."/>
            <person name="Dunn P."/>
            <person name="Durbin K.J."/>
            <person name="Evangelista C.C."/>
            <person name="Ferraz C."/>
            <person name="Ferriera S."/>
            <person name="Fleischmann W."/>
            <person name="Fosler C."/>
            <person name="Gabrielian A.E."/>
            <person name="Garg N.S."/>
            <person name="Gelbart W.M."/>
            <person name="Glasser K."/>
            <person name="Glodek A."/>
            <person name="Gong F."/>
            <person name="Gorrell J.H."/>
            <person name="Gu Z."/>
            <person name="Guan P."/>
            <person name="Harris M."/>
            <person name="Harris N.L."/>
            <person name="Harvey D.A."/>
            <person name="Heiman T.J."/>
            <person name="Hernandez J.R."/>
            <person name="Houck J."/>
            <person name="Hostin D."/>
            <person name="Houston K.A."/>
            <person name="Howland T.J."/>
            <person name="Wei M.-H."/>
            <person name="Ibegwam C."/>
            <person name="Jalali M."/>
            <person name="Kalush F."/>
            <person name="Karpen G.H."/>
            <person name="Ke Z."/>
            <person name="Kennison J.A."/>
            <person name="Ketchum K.A."/>
            <person name="Kimmel B.E."/>
            <person name="Kodira C.D."/>
            <person name="Kraft C.L."/>
            <person name="Kravitz S."/>
            <person name="Kulp D."/>
            <person name="Lai Z."/>
            <person name="Lasko P."/>
            <person name="Lei Y."/>
            <person name="Levitsky A.A."/>
            <person name="Li J.H."/>
            <person name="Li Z."/>
            <person name="Liang Y."/>
            <person name="Lin X."/>
            <person name="Liu X."/>
            <person name="Mattei B."/>
            <person name="McIntosh T.C."/>
            <person name="McLeod M.P."/>
            <person name="McPherson D."/>
            <person name="Merkulov G."/>
            <person name="Milshina N.V."/>
            <person name="Mobarry C."/>
            <person name="Morris J."/>
            <person name="Moshrefi A."/>
            <person name="Mount S.M."/>
            <person name="Moy M."/>
            <person name="Murphy B."/>
            <person name="Murphy L."/>
            <person name="Muzny D.M."/>
            <person name="Nelson D.L."/>
            <person name="Nelson D.R."/>
            <person name="Nelson K.A."/>
            <person name="Nixon K."/>
            <person name="Nusskern D.R."/>
            <person name="Pacleb J.M."/>
            <person name="Palazzolo M."/>
            <person name="Pittman G.S."/>
            <person name="Pan S."/>
            <person name="Pollard J."/>
            <person name="Puri V."/>
            <person name="Reese M.G."/>
            <person name="Reinert K."/>
            <person name="Remington K."/>
            <person name="Saunders R.D.C."/>
            <person name="Scheeler F."/>
            <person name="Shen H."/>
            <person name="Shue B.C."/>
            <person name="Siden-Kiamos I."/>
            <person name="Simpson M."/>
            <person name="Skupski M.P."/>
            <person name="Smith T.J."/>
            <person name="Spier E."/>
            <person name="Spradling A.C."/>
            <person name="Stapleton M."/>
            <person name="Strong R."/>
            <person name="Sun E."/>
            <person name="Svirskas R."/>
            <person name="Tector C."/>
            <person name="Turner R."/>
            <person name="Venter E."/>
            <person name="Wang A.H."/>
            <person name="Wang X."/>
            <person name="Wang Z.-Y."/>
            <person name="Wassarman D.A."/>
            <person name="Weinstock G.M."/>
            <person name="Weissenbach J."/>
            <person name="Williams S.M."/>
            <person name="Woodage T."/>
            <person name="Worley K.C."/>
            <person name="Wu D."/>
            <person name="Yang S."/>
            <person name="Yao Q.A."/>
            <person name="Ye J."/>
            <person name="Yeh R.-F."/>
            <person name="Zaveri J.S."/>
            <person name="Zhan M."/>
            <person name="Zhang G."/>
            <person name="Zhao Q."/>
            <person name="Zheng L."/>
            <person name="Zheng X.H."/>
            <person name="Zhong F.N."/>
            <person name="Zhong W."/>
            <person name="Zhou X."/>
            <person name="Zhu S.C."/>
            <person name="Zhu X."/>
            <person name="Smith H.O."/>
            <person name="Gibbs R.A."/>
            <person name="Myers E.W."/>
            <person name="Rubin G.M."/>
            <person name="Venter J.C."/>
        </authorList>
    </citation>
    <scope>NUCLEOTIDE SEQUENCE [LARGE SCALE GENOMIC DNA]</scope>
    <source>
        <strain>Berkeley</strain>
    </source>
</reference>
<reference key="6">
    <citation type="journal article" date="2002" name="Genome Biol.">
        <title>Annotation of the Drosophila melanogaster euchromatic genome: a systematic review.</title>
        <authorList>
            <person name="Misra S."/>
            <person name="Crosby M.A."/>
            <person name="Mungall C.J."/>
            <person name="Matthews B.B."/>
            <person name="Campbell K.S."/>
            <person name="Hradecky P."/>
            <person name="Huang Y."/>
            <person name="Kaminker J.S."/>
            <person name="Millburn G.H."/>
            <person name="Prochnik S.E."/>
            <person name="Smith C.D."/>
            <person name="Tupy J.L."/>
            <person name="Whitfield E.J."/>
            <person name="Bayraktaroglu L."/>
            <person name="Berman B.P."/>
            <person name="Bettencourt B.R."/>
            <person name="Celniker S.E."/>
            <person name="de Grey A.D.N.J."/>
            <person name="Drysdale R.A."/>
            <person name="Harris N.L."/>
            <person name="Richter J."/>
            <person name="Russo S."/>
            <person name="Schroeder A.J."/>
            <person name="Shu S.Q."/>
            <person name="Stapleton M."/>
            <person name="Yamada C."/>
            <person name="Ashburner M."/>
            <person name="Gelbart W.M."/>
            <person name="Rubin G.M."/>
            <person name="Lewis S.E."/>
        </authorList>
    </citation>
    <scope>GENOME REANNOTATION</scope>
    <scope>ALTERNATIVE SPLICING</scope>
    <source>
        <strain>Berkeley</strain>
    </source>
</reference>
<reference key="7">
    <citation type="journal article" date="2002" name="Genome Biol.">
        <title>A Drosophila full-length cDNA resource.</title>
        <authorList>
            <person name="Stapleton M."/>
            <person name="Carlson J.W."/>
            <person name="Brokstein P."/>
            <person name="Yu C."/>
            <person name="Champe M."/>
            <person name="George R.A."/>
            <person name="Guarin H."/>
            <person name="Kronmiller B."/>
            <person name="Pacleb J.M."/>
            <person name="Park S."/>
            <person name="Wan K.H."/>
            <person name="Rubin G.M."/>
            <person name="Celniker S.E."/>
        </authorList>
    </citation>
    <scope>NUCLEOTIDE SEQUENCE [LARGE SCALE MRNA] (ISOFORM GPDH-2)</scope>
    <source>
        <strain>Berkeley</strain>
        <tissue>Ovary</tissue>
    </source>
</reference>
<reference key="8">
    <citation type="journal article" date="1994" name="Biochem. Genet.">
        <title>Molecular heterogeneity of naturally occurring sn-glycerol-3-phosphate dehydrogenase low-activity variants in Drosophila melanogaster.</title>
        <authorList>
            <person name="Reed D.S."/>
            <person name="Gibson J.B."/>
        </authorList>
    </citation>
    <scope>NUCLEOTIDE SEQUENCE [GENOMIC DNA] OF 2-363 (ALLELES GPDH-MB5 AND GPDH-ACYG22)</scope>
    <source>
        <strain>Cygnet</strain>
        <strain>Mission beach</strain>
    </source>
</reference>
<reference key="9">
    <citation type="journal article" date="1986" name="J. Biol. Chem.">
        <title>Isolation of a genomic clone for Drosophila sn-glycerol-3-phosphate dehydrogenase using synthetic oligonucleotides.</title>
        <authorList>
            <person name="Cook J.L."/>
            <person name="Shaffer J.B."/>
            <person name="Bewley G.C."/>
            <person name="MacIntyre R.J."/>
            <person name="Wright D.A."/>
        </authorList>
    </citation>
    <scope>NUCLEOTIDE SEQUENCE [GENOMIC DNA] OF 206-245</scope>
    <source>
        <strain>Canton-S</strain>
    </source>
</reference>
<reference key="10">
    <citation type="journal article" date="1988" name="J. Biol. Chem.">
        <title>Drosophila sn-glycerol-3-phosphate dehydrogenase isozymes are generated by alternate pathways of RNA processing resulting in different carboxyl-terminal amino acid sequences.</title>
        <authorList>
            <person name="Cook J.L."/>
            <person name="Bewley G.C."/>
            <person name="Shaffer J.B."/>
        </authorList>
    </citation>
    <scope>NUCLEOTIDE SEQUENCE [GENOMIC DNA] OF 298-350</scope>
    <scope>ALTERNATIVE SPLICING</scope>
    <scope>DEVELOPMENTAL STAGE</scope>
    <source>
        <strain>Canton-S</strain>
    </source>
</reference>
<proteinExistence type="evidence at protein level"/>
<gene>
    <name evidence="7" type="primary">Gpdh1</name>
    <name evidence="5" type="synonym">Gpdh</name>
    <name evidence="7" type="ORF">CG9042</name>
</gene>
<comment type="catalytic activity">
    <reaction>
        <text>sn-glycerol 3-phosphate + NAD(+) = dihydroxyacetone phosphate + NADH + H(+)</text>
        <dbReference type="Rhea" id="RHEA:11092"/>
        <dbReference type="ChEBI" id="CHEBI:15378"/>
        <dbReference type="ChEBI" id="CHEBI:57540"/>
        <dbReference type="ChEBI" id="CHEBI:57597"/>
        <dbReference type="ChEBI" id="CHEBI:57642"/>
        <dbReference type="ChEBI" id="CHEBI:57945"/>
        <dbReference type="EC" id="1.1.1.8"/>
    </reaction>
</comment>
<comment type="pathway">
    <text>Phospholipid metabolism; alpha-glycerophosphate cycle.</text>
</comment>
<comment type="subunit">
    <text>Homodimer.</text>
</comment>
<comment type="subcellular location">
    <subcellularLocation>
        <location>Cytoplasm</location>
    </subcellularLocation>
</comment>
<comment type="alternative products">
    <event type="alternative splicing"/>
    <isoform>
        <id>P13706-1</id>
        <name>GPDH-4</name>
        <sequence type="displayed"/>
    </isoform>
    <isoform>
        <id>P13706-2</id>
        <name>GPDH-1</name>
        <name>GPDH-411</name>
        <name>C</name>
        <sequence type="described" ref="VSP_001589"/>
    </isoform>
    <isoform>
        <id>P13706-3</id>
        <name>GPDH-2</name>
        <name>GPDH-37</name>
        <name>B</name>
        <sequence type="described" ref="VSP_001591"/>
    </isoform>
    <isoform>
        <id>P13706-4</id>
        <name>GPDH-3</name>
        <name>GPDH-1A</name>
        <name>A</name>
        <sequence type="described" ref="VSP_001590"/>
    </isoform>
</comment>
<comment type="tissue specificity">
    <text>Isoform GPDH-1 is predominant in thorax and isoform GPDH-3 in abdomen.</text>
</comment>
<comment type="developmental stage">
    <text evidence="2 3">Isoform GPDH-2 and isoform GPDH-3 are expressed in both larvae and adults. Isoform GPDH-1 is expressed only in adults.</text>
</comment>
<comment type="polymorphism">
    <text>There are two common alleles; fast and slow. The sequence of fast is shown here.</text>
</comment>
<comment type="similarity">
    <text evidence="6">Belongs to the NAD-dependent glycerol-3-phosphate dehydrogenase family.</text>
</comment>
<protein>
    <recommendedName>
        <fullName>Glycerol-3-phosphate dehydrogenase [NAD(+)], cytoplasmic</fullName>
        <shortName>GPD-C</shortName>
        <shortName>GPDH-C</shortName>
        <ecNumber>1.1.1.8</ecNumber>
    </recommendedName>
</protein>
<accession>P13706</accession>
<accession>Q27590</accession>
<accession>Q27925</accession>
<accession>Q95077</accession>
<accession>Q95TV4</accession>
<accession>Q9VML0</accession>
<keyword id="KW-0025">Alternative splicing</keyword>
<keyword id="KW-0963">Cytoplasm</keyword>
<keyword id="KW-0903">Direct protein sequencing</keyword>
<keyword id="KW-0520">NAD</keyword>
<keyword id="KW-0560">Oxidoreductase</keyword>
<keyword id="KW-1185">Reference proteome</keyword>